<feature type="chain" id="PRO_1000005302" description="Small ribosomal subunit protein bS6">
    <location>
        <begin position="1"/>
        <end position="128"/>
    </location>
</feature>
<protein>
    <recommendedName>
        <fullName evidence="1">Small ribosomal subunit protein bS6</fullName>
    </recommendedName>
    <alternativeName>
        <fullName evidence="2">30S ribosomal protein S6</fullName>
    </alternativeName>
</protein>
<evidence type="ECO:0000255" key="1">
    <source>
        <dbReference type="HAMAP-Rule" id="MF_00360"/>
    </source>
</evidence>
<evidence type="ECO:0000305" key="2"/>
<organism>
    <name type="scientific">Nitratiruptor sp. (strain SB155-2)</name>
    <dbReference type="NCBI Taxonomy" id="387092"/>
    <lineage>
        <taxon>Bacteria</taxon>
        <taxon>Pseudomonadati</taxon>
        <taxon>Campylobacterota</taxon>
        <taxon>Epsilonproteobacteria</taxon>
        <taxon>Nautiliales</taxon>
        <taxon>Nitratiruptoraceae</taxon>
        <taxon>Nitratiruptor</taxon>
    </lineage>
</organism>
<comment type="function">
    <text evidence="1">Binds together with bS18 to 16S ribosomal RNA.</text>
</comment>
<comment type="similarity">
    <text evidence="1">Belongs to the bacterial ribosomal protein bS6 family.</text>
</comment>
<accession>A6Q464</accession>
<proteinExistence type="inferred from homology"/>
<sequence length="128" mass="15050">MRHYETLFVLKPTLTDEESKAKFEFIKEVIQNNGGEIVATEDLGVRKLAYPIQKFERGHYYIIYFTAPSHTVLELERIYRITEDVIRFLTIKYETKKDISAWEKMVERAKKLSGQTNSEAKEEANENV</sequence>
<gene>
    <name evidence="1" type="primary">rpsF</name>
    <name type="ordered locus">NIS_1164</name>
</gene>
<reference key="1">
    <citation type="journal article" date="2007" name="Proc. Natl. Acad. Sci. U.S.A.">
        <title>Deep-sea vent epsilon-proteobacterial genomes provide insights into emergence of pathogens.</title>
        <authorList>
            <person name="Nakagawa S."/>
            <person name="Takaki Y."/>
            <person name="Shimamura S."/>
            <person name="Reysenbach A.-L."/>
            <person name="Takai K."/>
            <person name="Horikoshi K."/>
        </authorList>
    </citation>
    <scope>NUCLEOTIDE SEQUENCE [LARGE SCALE GENOMIC DNA]</scope>
    <source>
        <strain>SB155-2</strain>
    </source>
</reference>
<name>RS6_NITSB</name>
<keyword id="KW-1185">Reference proteome</keyword>
<keyword id="KW-0687">Ribonucleoprotein</keyword>
<keyword id="KW-0689">Ribosomal protein</keyword>
<keyword id="KW-0694">RNA-binding</keyword>
<keyword id="KW-0699">rRNA-binding</keyword>
<dbReference type="EMBL" id="AP009178">
    <property type="protein sequence ID" value="BAF70273.1"/>
    <property type="molecule type" value="Genomic_DNA"/>
</dbReference>
<dbReference type="RefSeq" id="WP_012082536.1">
    <property type="nucleotide sequence ID" value="NC_009662.1"/>
</dbReference>
<dbReference type="SMR" id="A6Q464"/>
<dbReference type="FunCoup" id="A6Q464">
    <property type="interactions" value="474"/>
</dbReference>
<dbReference type="STRING" id="387092.NIS_1164"/>
<dbReference type="KEGG" id="nis:NIS_1164"/>
<dbReference type="eggNOG" id="COG0360">
    <property type="taxonomic scope" value="Bacteria"/>
</dbReference>
<dbReference type="HOGENOM" id="CLU_113441_4_1_7"/>
<dbReference type="InParanoid" id="A6Q464"/>
<dbReference type="OrthoDB" id="9812702at2"/>
<dbReference type="Proteomes" id="UP000001118">
    <property type="component" value="Chromosome"/>
</dbReference>
<dbReference type="GO" id="GO:0022627">
    <property type="term" value="C:cytosolic small ribosomal subunit"/>
    <property type="evidence" value="ECO:0007669"/>
    <property type="project" value="TreeGrafter"/>
</dbReference>
<dbReference type="GO" id="GO:0070181">
    <property type="term" value="F:small ribosomal subunit rRNA binding"/>
    <property type="evidence" value="ECO:0007669"/>
    <property type="project" value="TreeGrafter"/>
</dbReference>
<dbReference type="GO" id="GO:0003735">
    <property type="term" value="F:structural constituent of ribosome"/>
    <property type="evidence" value="ECO:0007669"/>
    <property type="project" value="InterPro"/>
</dbReference>
<dbReference type="GO" id="GO:0006412">
    <property type="term" value="P:translation"/>
    <property type="evidence" value="ECO:0007669"/>
    <property type="project" value="UniProtKB-UniRule"/>
</dbReference>
<dbReference type="CDD" id="cd00473">
    <property type="entry name" value="bS6"/>
    <property type="match status" value="1"/>
</dbReference>
<dbReference type="Gene3D" id="3.30.70.60">
    <property type="match status" value="1"/>
</dbReference>
<dbReference type="HAMAP" id="MF_00360">
    <property type="entry name" value="Ribosomal_bS6"/>
    <property type="match status" value="1"/>
</dbReference>
<dbReference type="InterPro" id="IPR000529">
    <property type="entry name" value="Ribosomal_bS6"/>
</dbReference>
<dbReference type="InterPro" id="IPR035980">
    <property type="entry name" value="Ribosomal_bS6_sf"/>
</dbReference>
<dbReference type="InterPro" id="IPR020814">
    <property type="entry name" value="Ribosomal_S6_plastid/chlpt"/>
</dbReference>
<dbReference type="InterPro" id="IPR014717">
    <property type="entry name" value="Transl_elong_EF1B/ribsomal_bS6"/>
</dbReference>
<dbReference type="NCBIfam" id="TIGR00166">
    <property type="entry name" value="S6"/>
    <property type="match status" value="1"/>
</dbReference>
<dbReference type="PANTHER" id="PTHR21011">
    <property type="entry name" value="MITOCHONDRIAL 28S RIBOSOMAL PROTEIN S6"/>
    <property type="match status" value="1"/>
</dbReference>
<dbReference type="PANTHER" id="PTHR21011:SF1">
    <property type="entry name" value="SMALL RIBOSOMAL SUBUNIT PROTEIN BS6M"/>
    <property type="match status" value="1"/>
</dbReference>
<dbReference type="Pfam" id="PF01250">
    <property type="entry name" value="Ribosomal_S6"/>
    <property type="match status" value="1"/>
</dbReference>
<dbReference type="SUPFAM" id="SSF54995">
    <property type="entry name" value="Ribosomal protein S6"/>
    <property type="match status" value="1"/>
</dbReference>